<dbReference type="EC" id="7.4.2.8" evidence="1"/>
<dbReference type="EMBL" id="AY673996">
    <property type="protein sequence ID" value="AAT79772.1"/>
    <property type="molecule type" value="Genomic_DNA"/>
</dbReference>
<dbReference type="RefSeq" id="YP_063697.1">
    <property type="nucleotide sequence ID" value="NC_006137.1"/>
</dbReference>
<dbReference type="SMR" id="Q6B8L3"/>
<dbReference type="GeneID" id="2944148"/>
<dbReference type="GO" id="GO:0009570">
    <property type="term" value="C:chloroplast stroma"/>
    <property type="evidence" value="ECO:0007669"/>
    <property type="project" value="UniProtKB-SubCell"/>
</dbReference>
<dbReference type="GO" id="GO:0009535">
    <property type="term" value="C:chloroplast thylakoid membrane"/>
    <property type="evidence" value="ECO:0007669"/>
    <property type="project" value="UniProtKB-SubCell"/>
</dbReference>
<dbReference type="GO" id="GO:0005829">
    <property type="term" value="C:cytosol"/>
    <property type="evidence" value="ECO:0007669"/>
    <property type="project" value="TreeGrafter"/>
</dbReference>
<dbReference type="GO" id="GO:0005886">
    <property type="term" value="C:plasma membrane"/>
    <property type="evidence" value="ECO:0007669"/>
    <property type="project" value="TreeGrafter"/>
</dbReference>
<dbReference type="GO" id="GO:0005524">
    <property type="term" value="F:ATP binding"/>
    <property type="evidence" value="ECO:0007669"/>
    <property type="project" value="UniProtKB-UniRule"/>
</dbReference>
<dbReference type="GO" id="GO:0008564">
    <property type="term" value="F:protein-exporting ATPase activity"/>
    <property type="evidence" value="ECO:0007669"/>
    <property type="project" value="UniProtKB-EC"/>
</dbReference>
<dbReference type="GO" id="GO:0065002">
    <property type="term" value="P:intracellular protein transmembrane transport"/>
    <property type="evidence" value="ECO:0007669"/>
    <property type="project" value="UniProtKB-UniRule"/>
</dbReference>
<dbReference type="GO" id="GO:0017038">
    <property type="term" value="P:protein import"/>
    <property type="evidence" value="ECO:0007669"/>
    <property type="project" value="InterPro"/>
</dbReference>
<dbReference type="GO" id="GO:0006605">
    <property type="term" value="P:protein targeting"/>
    <property type="evidence" value="ECO:0007669"/>
    <property type="project" value="UniProtKB-UniRule"/>
</dbReference>
<dbReference type="CDD" id="cd17928">
    <property type="entry name" value="DEXDc_SecA"/>
    <property type="match status" value="1"/>
</dbReference>
<dbReference type="CDD" id="cd18803">
    <property type="entry name" value="SF2_C_secA"/>
    <property type="match status" value="1"/>
</dbReference>
<dbReference type="FunFam" id="3.90.1440.10:FF:000003">
    <property type="entry name" value="Preprotein translocase SecA subunit"/>
    <property type="match status" value="1"/>
</dbReference>
<dbReference type="FunFam" id="3.40.50.300:FF:000429">
    <property type="entry name" value="Preprotein translocase subunit SecA"/>
    <property type="match status" value="1"/>
</dbReference>
<dbReference type="Gene3D" id="1.10.3060.10">
    <property type="entry name" value="Helical scaffold and wing domains of SecA"/>
    <property type="match status" value="1"/>
</dbReference>
<dbReference type="Gene3D" id="3.40.50.300">
    <property type="entry name" value="P-loop containing nucleotide triphosphate hydrolases"/>
    <property type="match status" value="2"/>
</dbReference>
<dbReference type="Gene3D" id="3.90.1440.10">
    <property type="entry name" value="SecA, preprotein cross-linking domain"/>
    <property type="match status" value="1"/>
</dbReference>
<dbReference type="HAMAP" id="MF_01382">
    <property type="entry name" value="SecA"/>
    <property type="match status" value="1"/>
</dbReference>
<dbReference type="InterPro" id="IPR014001">
    <property type="entry name" value="Helicase_ATP-bd"/>
</dbReference>
<dbReference type="InterPro" id="IPR027417">
    <property type="entry name" value="P-loop_NTPase"/>
</dbReference>
<dbReference type="InterPro" id="IPR000185">
    <property type="entry name" value="SecA"/>
</dbReference>
<dbReference type="InterPro" id="IPR020937">
    <property type="entry name" value="SecA_CS"/>
</dbReference>
<dbReference type="InterPro" id="IPR011115">
    <property type="entry name" value="SecA_DEAD"/>
</dbReference>
<dbReference type="InterPro" id="IPR014018">
    <property type="entry name" value="SecA_motor_DEAD"/>
</dbReference>
<dbReference type="InterPro" id="IPR011130">
    <property type="entry name" value="SecA_preprotein_X-link_dom"/>
</dbReference>
<dbReference type="InterPro" id="IPR044722">
    <property type="entry name" value="SecA_SF2_C"/>
</dbReference>
<dbReference type="InterPro" id="IPR011116">
    <property type="entry name" value="SecA_Wing/Scaffold"/>
</dbReference>
<dbReference type="InterPro" id="IPR036266">
    <property type="entry name" value="SecA_Wing/Scaffold_sf"/>
</dbReference>
<dbReference type="InterPro" id="IPR036670">
    <property type="entry name" value="SecA_X-link_sf"/>
</dbReference>
<dbReference type="NCBIfam" id="NF009538">
    <property type="entry name" value="PRK12904.1"/>
    <property type="match status" value="1"/>
</dbReference>
<dbReference type="NCBIfam" id="TIGR00963">
    <property type="entry name" value="secA"/>
    <property type="match status" value="1"/>
</dbReference>
<dbReference type="PANTHER" id="PTHR30612:SF0">
    <property type="entry name" value="CHLOROPLAST PROTEIN-TRANSPORTING ATPASE"/>
    <property type="match status" value="1"/>
</dbReference>
<dbReference type="PANTHER" id="PTHR30612">
    <property type="entry name" value="SECA INNER MEMBRANE COMPONENT OF SEC PROTEIN SECRETION SYSTEM"/>
    <property type="match status" value="1"/>
</dbReference>
<dbReference type="Pfam" id="PF21090">
    <property type="entry name" value="P-loop_SecA"/>
    <property type="match status" value="1"/>
</dbReference>
<dbReference type="Pfam" id="PF07517">
    <property type="entry name" value="SecA_DEAD"/>
    <property type="match status" value="1"/>
</dbReference>
<dbReference type="Pfam" id="PF01043">
    <property type="entry name" value="SecA_PP_bind"/>
    <property type="match status" value="1"/>
</dbReference>
<dbReference type="Pfam" id="PF07516">
    <property type="entry name" value="SecA_SW"/>
    <property type="match status" value="1"/>
</dbReference>
<dbReference type="PRINTS" id="PR00906">
    <property type="entry name" value="SECA"/>
</dbReference>
<dbReference type="SMART" id="SM00957">
    <property type="entry name" value="SecA_DEAD"/>
    <property type="match status" value="1"/>
</dbReference>
<dbReference type="SMART" id="SM00958">
    <property type="entry name" value="SecA_PP_bind"/>
    <property type="match status" value="1"/>
</dbReference>
<dbReference type="SUPFAM" id="SSF81886">
    <property type="entry name" value="Helical scaffold and wing domains of SecA"/>
    <property type="match status" value="1"/>
</dbReference>
<dbReference type="SUPFAM" id="SSF52540">
    <property type="entry name" value="P-loop containing nucleoside triphosphate hydrolases"/>
    <property type="match status" value="2"/>
</dbReference>
<dbReference type="SUPFAM" id="SSF81767">
    <property type="entry name" value="Pre-protein crosslinking domain of SecA"/>
    <property type="match status" value="1"/>
</dbReference>
<dbReference type="PROSITE" id="PS01312">
    <property type="entry name" value="SECA"/>
    <property type="match status" value="1"/>
</dbReference>
<dbReference type="PROSITE" id="PS51196">
    <property type="entry name" value="SECA_MOTOR_DEAD"/>
    <property type="match status" value="1"/>
</dbReference>
<keyword id="KW-0067">ATP-binding</keyword>
<keyword id="KW-0150">Chloroplast</keyword>
<keyword id="KW-0472">Membrane</keyword>
<keyword id="KW-0547">Nucleotide-binding</keyword>
<keyword id="KW-0934">Plastid</keyword>
<keyword id="KW-0653">Protein transport</keyword>
<keyword id="KW-0793">Thylakoid</keyword>
<keyword id="KW-1278">Translocase</keyword>
<keyword id="KW-0811">Translocation</keyword>
<keyword id="KW-0813">Transport</keyword>
<evidence type="ECO:0000255" key="1">
    <source>
        <dbReference type="HAMAP-Rule" id="MF_01382"/>
    </source>
</evidence>
<gene>
    <name evidence="1" type="primary">secA</name>
    <name type="ordered locus">Grc000191</name>
</gene>
<name>SECA_GRATL</name>
<sequence>MFNFFKKNKLNKFQNTINEIHQIGNTVKNYSDAELKKQTHKLKKKIIQNSNLTEILPESFAIVKEAIKRSTGMILFDVQLVGSIVLHQGQIAEMKTGEGKTIVAITTGYLNALTSKGVHIITVNDYLAKRDSELAQKICSYIDLKVGLITQSMTYEEKKRAYDCDITYITNSELGFDYLRDNMAIEFNQIVQRGFNFAIIDEVDSILIDEARTPLIISGPFEIEINKYKKSTSIANTLQKDLDYEIDEKTKNITLTEKGISRCENMLNIDNLYDIHDSWIQYLLNSLKAKDLFLKNQHYIVKNNEIIIVDEFTGRVMQGRRWSDGLHQAIESKENIPIQQENKTLASITYQNLFLLYEKLSGMTGTAKTEETELDKIYNLEVLEIPTNKICKRQDLPDLVYKTEYKKWQAIADECFDMYHIGRPTLIGTTNVEKSELLAKILMELQIPFNLLNAKPENVSREAEIITQAGRKNTITISTNMAGRGTDIILGGNPEALSKLALTYYLQNKLGLKVNYLLNNIETQITTIINNYVLDMQELDIYKYKNIDLKKIQYYIEKIIKNEHTKYSEEEKLQKLYLKILSEYKNICYQEKQEVLKLGGLYVIGTERHESRRIDNQLRGRAGRQGDIGASRFFLSLEDNLLRIFGGDKISQLMDNLNIDEHTPIESIILSKSLDSAQKKVESYFYDIRKQLFEYDEVINNQRQAIYAERKRILQSSFTRDCIIEYAESTIDEILTAFYREDNINNKNHIIKKIYQLLNLTENFHFNTLYDMNYKQIQEFLYEQLRISYDLRESYLEQLRPGLIRKLEKYYLLQQIDKAWQDHLDKMALLRESIGWRSYGQQDPLVEYKNEAFSLFINMVRYIRQTVTYLTMRSRLIINVNN</sequence>
<reference key="1">
    <citation type="journal article" date="2004" name="J. Mol. Evol.">
        <title>Comparative analysis of the complete plastid genome sequence of the red alga Gracilaria tenuistipitata var. liui provides insights into the evolution of rhodoplasts and their relationship to other plastids.</title>
        <authorList>
            <person name="Hagopian J.C."/>
            <person name="Reis M."/>
            <person name="Kitajima J.P."/>
            <person name="Bhattacharya D."/>
            <person name="de Oliveira M.C."/>
        </authorList>
    </citation>
    <scope>NUCLEOTIDE SEQUENCE [LARGE SCALE GENOMIC DNA]</scope>
</reference>
<geneLocation type="chloroplast"/>
<accession>Q6B8L3</accession>
<proteinExistence type="inferred from homology"/>
<protein>
    <recommendedName>
        <fullName evidence="1">Protein translocase subunit SecA</fullName>
        <ecNumber evidence="1">7.4.2.8</ecNumber>
    </recommendedName>
</protein>
<feature type="chain" id="PRO_0000318487" description="Protein translocase subunit SecA">
    <location>
        <begin position="1"/>
        <end position="882"/>
    </location>
</feature>
<feature type="binding site" evidence="1">
    <location>
        <position position="79"/>
    </location>
    <ligand>
        <name>ATP</name>
        <dbReference type="ChEBI" id="CHEBI:30616"/>
    </ligand>
</feature>
<feature type="binding site" evidence="1">
    <location>
        <begin position="97"/>
        <end position="101"/>
    </location>
    <ligand>
        <name>ATP</name>
        <dbReference type="ChEBI" id="CHEBI:30616"/>
    </ligand>
</feature>
<feature type="binding site" evidence="1">
    <location>
        <position position="487"/>
    </location>
    <ligand>
        <name>ATP</name>
        <dbReference type="ChEBI" id="CHEBI:30616"/>
    </ligand>
</feature>
<comment type="function">
    <text evidence="1">Has a central role in coupling the hydrolysis of ATP to the transfer of proteins across the thylakoid membrane.</text>
</comment>
<comment type="catalytic activity">
    <reaction evidence="1">
        <text>ATP + H2O + cellular proteinSide 1 = ADP + phosphate + cellular proteinSide 2.</text>
        <dbReference type="EC" id="7.4.2.8"/>
    </reaction>
</comment>
<comment type="subcellular location">
    <subcellularLocation>
        <location evidence="1">Plastid</location>
        <location evidence="1">Chloroplast stroma</location>
    </subcellularLocation>
    <subcellularLocation>
        <location evidence="1">Plastid</location>
        <location evidence="1">Chloroplast thylakoid membrane</location>
        <topology evidence="1">Peripheral membrane protein</topology>
    </subcellularLocation>
    <text evidence="1">A minor fraction is associated with the chloroplast thylakoid membrane.</text>
</comment>
<comment type="similarity">
    <text evidence="1">Belongs to the SecA family.</text>
</comment>
<organism>
    <name type="scientific">Gracilaria tenuistipitata var. liui</name>
    <name type="common">Red alga</name>
    <dbReference type="NCBI Taxonomy" id="285951"/>
    <lineage>
        <taxon>Eukaryota</taxon>
        <taxon>Rhodophyta</taxon>
        <taxon>Florideophyceae</taxon>
        <taxon>Rhodymeniophycidae</taxon>
        <taxon>Gracilariales</taxon>
        <taxon>Gracilariaceae</taxon>
        <taxon>Gracilaria</taxon>
        <taxon>Gracilaria tenuistipitata</taxon>
    </lineage>
</organism>